<sequence>MKKTMSAITAAAAVTSCFTGFGAASFSAPAKAAAQTNTLSENTNQSAAELVKNLYNTAYKGEMPQQAQGLTINKSTKGDVHAAFGEPERPVGGDNRFDLYHWNMGQPGYGFSYHKDMTISEIRYFGTGVERQLNLGGVTPEVLQKQLGPVNRVLTVPFTDEIDYVYDTGRYELHFVIGTDQTADHVNLKAK</sequence>
<keyword id="KW-0002">3D-structure</keyword>
<keyword id="KW-1185">Reference proteome</keyword>
<keyword id="KW-0732">Signal</keyword>
<proteinExistence type="evidence at protein level"/>
<feature type="signal peptide" evidence="1">
    <location>
        <begin position="1"/>
        <end position="23"/>
    </location>
</feature>
<feature type="chain" id="PRO_0000013707" description="Uncharacterized protein YjgB">
    <location>
        <begin position="24"/>
        <end position="191"/>
    </location>
</feature>
<feature type="helix" evidence="2">
    <location>
        <begin position="45"/>
        <end position="58"/>
    </location>
</feature>
<feature type="turn" evidence="2">
    <location>
        <begin position="59"/>
        <end position="61"/>
    </location>
</feature>
<feature type="helix" evidence="2">
    <location>
        <begin position="65"/>
        <end position="67"/>
    </location>
</feature>
<feature type="turn" evidence="2">
    <location>
        <begin position="72"/>
        <end position="74"/>
    </location>
</feature>
<feature type="helix" evidence="2">
    <location>
        <begin position="77"/>
        <end position="84"/>
    </location>
</feature>
<feature type="strand" evidence="2">
    <location>
        <begin position="97"/>
        <end position="100"/>
    </location>
</feature>
<feature type="strand" evidence="2">
    <location>
        <begin position="108"/>
        <end position="113"/>
    </location>
</feature>
<feature type="strand" evidence="2">
    <location>
        <begin position="117"/>
        <end position="126"/>
    </location>
</feature>
<feature type="helix" evidence="2">
    <location>
        <begin position="131"/>
        <end position="133"/>
    </location>
</feature>
<feature type="helix" evidence="2">
    <location>
        <begin position="135"/>
        <end position="137"/>
    </location>
</feature>
<feature type="helix" evidence="2">
    <location>
        <begin position="140"/>
        <end position="147"/>
    </location>
</feature>
<feature type="strand" evidence="2">
    <location>
        <begin position="151"/>
        <end position="155"/>
    </location>
</feature>
<feature type="strand" evidence="2">
    <location>
        <begin position="162"/>
        <end position="168"/>
    </location>
</feature>
<feature type="strand" evidence="2">
    <location>
        <begin position="171"/>
        <end position="177"/>
    </location>
</feature>
<feature type="strand" evidence="2">
    <location>
        <begin position="179"/>
        <end position="190"/>
    </location>
</feature>
<protein>
    <recommendedName>
        <fullName>Uncharacterized protein YjgB</fullName>
    </recommendedName>
</protein>
<name>YJGB_BACSU</name>
<organism>
    <name type="scientific">Bacillus subtilis (strain 168)</name>
    <dbReference type="NCBI Taxonomy" id="224308"/>
    <lineage>
        <taxon>Bacteria</taxon>
        <taxon>Bacillati</taxon>
        <taxon>Bacillota</taxon>
        <taxon>Bacilli</taxon>
        <taxon>Bacillales</taxon>
        <taxon>Bacillaceae</taxon>
        <taxon>Bacillus</taxon>
    </lineage>
</organism>
<gene>
    <name type="primary">yjgB</name>
    <name type="ordered locus">BSU12150</name>
</gene>
<evidence type="ECO:0000255" key="1"/>
<evidence type="ECO:0007829" key="2">
    <source>
        <dbReference type="PDB" id="4YGT"/>
    </source>
</evidence>
<reference key="1">
    <citation type="submission" date="1997-07" db="EMBL/GenBank/DDBJ databases">
        <title>A 35.7 kb DNA fragment from Bacillus subtilis chromosome containing a putative 12.3 kb operon involved in hexuronate catabolism and a perfect catabolite-responsive element.</title>
        <authorList>
            <person name="Rivolta C."/>
            <person name="Soldo B."/>
            <person name="Lazarevic V."/>
            <person name="Joris B."/>
            <person name="Mauel C."/>
            <person name="Karamata D."/>
        </authorList>
    </citation>
    <scope>NUCLEOTIDE SEQUENCE [GENOMIC DNA]</scope>
    <source>
        <strain>168</strain>
    </source>
</reference>
<reference key="2">
    <citation type="journal article" date="1997" name="Nature">
        <title>The complete genome sequence of the Gram-positive bacterium Bacillus subtilis.</title>
        <authorList>
            <person name="Kunst F."/>
            <person name="Ogasawara N."/>
            <person name="Moszer I."/>
            <person name="Albertini A.M."/>
            <person name="Alloni G."/>
            <person name="Azevedo V."/>
            <person name="Bertero M.G."/>
            <person name="Bessieres P."/>
            <person name="Bolotin A."/>
            <person name="Borchert S."/>
            <person name="Borriss R."/>
            <person name="Boursier L."/>
            <person name="Brans A."/>
            <person name="Braun M."/>
            <person name="Brignell S.C."/>
            <person name="Bron S."/>
            <person name="Brouillet S."/>
            <person name="Bruschi C.V."/>
            <person name="Caldwell B."/>
            <person name="Capuano V."/>
            <person name="Carter N.M."/>
            <person name="Choi S.-K."/>
            <person name="Codani J.-J."/>
            <person name="Connerton I.F."/>
            <person name="Cummings N.J."/>
            <person name="Daniel R.A."/>
            <person name="Denizot F."/>
            <person name="Devine K.M."/>
            <person name="Duesterhoeft A."/>
            <person name="Ehrlich S.D."/>
            <person name="Emmerson P.T."/>
            <person name="Entian K.-D."/>
            <person name="Errington J."/>
            <person name="Fabret C."/>
            <person name="Ferrari E."/>
            <person name="Foulger D."/>
            <person name="Fritz C."/>
            <person name="Fujita M."/>
            <person name="Fujita Y."/>
            <person name="Fuma S."/>
            <person name="Galizzi A."/>
            <person name="Galleron N."/>
            <person name="Ghim S.-Y."/>
            <person name="Glaser P."/>
            <person name="Goffeau A."/>
            <person name="Golightly E.J."/>
            <person name="Grandi G."/>
            <person name="Guiseppi G."/>
            <person name="Guy B.J."/>
            <person name="Haga K."/>
            <person name="Haiech J."/>
            <person name="Harwood C.R."/>
            <person name="Henaut A."/>
            <person name="Hilbert H."/>
            <person name="Holsappel S."/>
            <person name="Hosono S."/>
            <person name="Hullo M.-F."/>
            <person name="Itaya M."/>
            <person name="Jones L.-M."/>
            <person name="Joris B."/>
            <person name="Karamata D."/>
            <person name="Kasahara Y."/>
            <person name="Klaerr-Blanchard M."/>
            <person name="Klein C."/>
            <person name="Kobayashi Y."/>
            <person name="Koetter P."/>
            <person name="Koningstein G."/>
            <person name="Krogh S."/>
            <person name="Kumano M."/>
            <person name="Kurita K."/>
            <person name="Lapidus A."/>
            <person name="Lardinois S."/>
            <person name="Lauber J."/>
            <person name="Lazarevic V."/>
            <person name="Lee S.-M."/>
            <person name="Levine A."/>
            <person name="Liu H."/>
            <person name="Masuda S."/>
            <person name="Mauel C."/>
            <person name="Medigue C."/>
            <person name="Medina N."/>
            <person name="Mellado R.P."/>
            <person name="Mizuno M."/>
            <person name="Moestl D."/>
            <person name="Nakai S."/>
            <person name="Noback M."/>
            <person name="Noone D."/>
            <person name="O'Reilly M."/>
            <person name="Ogawa K."/>
            <person name="Ogiwara A."/>
            <person name="Oudega B."/>
            <person name="Park S.-H."/>
            <person name="Parro V."/>
            <person name="Pohl T.M."/>
            <person name="Portetelle D."/>
            <person name="Porwollik S."/>
            <person name="Prescott A.M."/>
            <person name="Presecan E."/>
            <person name="Pujic P."/>
            <person name="Purnelle B."/>
            <person name="Rapoport G."/>
            <person name="Rey M."/>
            <person name="Reynolds S."/>
            <person name="Rieger M."/>
            <person name="Rivolta C."/>
            <person name="Rocha E."/>
            <person name="Roche B."/>
            <person name="Rose M."/>
            <person name="Sadaie Y."/>
            <person name="Sato T."/>
            <person name="Scanlan E."/>
            <person name="Schleich S."/>
            <person name="Schroeter R."/>
            <person name="Scoffone F."/>
            <person name="Sekiguchi J."/>
            <person name="Sekowska A."/>
            <person name="Seror S.J."/>
            <person name="Serror P."/>
            <person name="Shin B.-S."/>
            <person name="Soldo B."/>
            <person name="Sorokin A."/>
            <person name="Tacconi E."/>
            <person name="Takagi T."/>
            <person name="Takahashi H."/>
            <person name="Takemaru K."/>
            <person name="Takeuchi M."/>
            <person name="Tamakoshi A."/>
            <person name="Tanaka T."/>
            <person name="Terpstra P."/>
            <person name="Tognoni A."/>
            <person name="Tosato V."/>
            <person name="Uchiyama S."/>
            <person name="Vandenbol M."/>
            <person name="Vannier F."/>
            <person name="Vassarotti A."/>
            <person name="Viari A."/>
            <person name="Wambutt R."/>
            <person name="Wedler E."/>
            <person name="Wedler H."/>
            <person name="Weitzenegger T."/>
            <person name="Winters P."/>
            <person name="Wipat A."/>
            <person name="Yamamoto H."/>
            <person name="Yamane K."/>
            <person name="Yasumoto K."/>
            <person name="Yata K."/>
            <person name="Yoshida K."/>
            <person name="Yoshikawa H.-F."/>
            <person name="Zumstein E."/>
            <person name="Yoshikawa H."/>
            <person name="Danchin A."/>
        </authorList>
    </citation>
    <scope>NUCLEOTIDE SEQUENCE [LARGE SCALE GENOMIC DNA]</scope>
    <source>
        <strain>168</strain>
    </source>
</reference>
<accession>O34960</accession>
<dbReference type="EMBL" id="AF015825">
    <property type="protein sequence ID" value="AAC46311.1"/>
    <property type="molecule type" value="Genomic_DNA"/>
</dbReference>
<dbReference type="EMBL" id="AL009126">
    <property type="protein sequence ID" value="CAB13072.1"/>
    <property type="molecule type" value="Genomic_DNA"/>
</dbReference>
<dbReference type="PIR" id="D69850">
    <property type="entry name" value="D69850"/>
</dbReference>
<dbReference type="RefSeq" id="NP_389097.1">
    <property type="nucleotide sequence ID" value="NC_000964.3"/>
</dbReference>
<dbReference type="RefSeq" id="WP_003245827.1">
    <property type="nucleotide sequence ID" value="NZ_OZ025638.1"/>
</dbReference>
<dbReference type="PDB" id="4YGT">
    <property type="method" value="X-ray"/>
    <property type="resolution" value="2.13 A"/>
    <property type="chains" value="A=33-191"/>
</dbReference>
<dbReference type="PDBsum" id="4YGT"/>
<dbReference type="SMR" id="O34960"/>
<dbReference type="FunCoup" id="O34960">
    <property type="interactions" value="36"/>
</dbReference>
<dbReference type="STRING" id="224308.BSU12150"/>
<dbReference type="PaxDb" id="224308-BSU12150"/>
<dbReference type="DNASU" id="936448"/>
<dbReference type="EnsemblBacteria" id="CAB13072">
    <property type="protein sequence ID" value="CAB13072"/>
    <property type="gene ID" value="BSU_12150"/>
</dbReference>
<dbReference type="GeneID" id="936448"/>
<dbReference type="KEGG" id="bsu:BSU12150"/>
<dbReference type="PATRIC" id="fig|224308.179.peg.1313"/>
<dbReference type="eggNOG" id="ENOG5032W9R">
    <property type="taxonomic scope" value="Bacteria"/>
</dbReference>
<dbReference type="InParanoid" id="O34960"/>
<dbReference type="OrthoDB" id="2597113at2"/>
<dbReference type="BioCyc" id="BSUB:BSU12150-MONOMER"/>
<dbReference type="EvolutionaryTrace" id="O34960"/>
<dbReference type="Proteomes" id="UP000001570">
    <property type="component" value="Chromosome"/>
</dbReference>
<dbReference type="InterPro" id="IPR025453">
    <property type="entry name" value="DUF4309"/>
</dbReference>
<dbReference type="Pfam" id="PF14172">
    <property type="entry name" value="DUF4309"/>
    <property type="match status" value="1"/>
</dbReference>